<dbReference type="EC" id="2.4.2.22" evidence="1"/>
<dbReference type="EMBL" id="AL766848">
    <property type="protein sequence ID" value="CAD46776.1"/>
    <property type="molecule type" value="Genomic_DNA"/>
</dbReference>
<dbReference type="RefSeq" id="WP_000770389.1">
    <property type="nucleotide sequence ID" value="NC_004368.1"/>
</dbReference>
<dbReference type="SMR" id="Q8E5B5"/>
<dbReference type="KEGG" id="san:gbs1117"/>
<dbReference type="eggNOG" id="COG0503">
    <property type="taxonomic scope" value="Bacteria"/>
</dbReference>
<dbReference type="HOGENOM" id="CLU_099015_0_0_9"/>
<dbReference type="UniPathway" id="UPA00602">
    <property type="reaction ID" value="UER00658"/>
</dbReference>
<dbReference type="Proteomes" id="UP000000823">
    <property type="component" value="Chromosome"/>
</dbReference>
<dbReference type="GO" id="GO:0005737">
    <property type="term" value="C:cytoplasm"/>
    <property type="evidence" value="ECO:0007669"/>
    <property type="project" value="UniProtKB-SubCell"/>
</dbReference>
<dbReference type="GO" id="GO:0000310">
    <property type="term" value="F:xanthine phosphoribosyltransferase activity"/>
    <property type="evidence" value="ECO:0007669"/>
    <property type="project" value="UniProtKB-UniRule"/>
</dbReference>
<dbReference type="GO" id="GO:0006166">
    <property type="term" value="P:purine ribonucleoside salvage"/>
    <property type="evidence" value="ECO:0007669"/>
    <property type="project" value="UniProtKB-KW"/>
</dbReference>
<dbReference type="GO" id="GO:0046110">
    <property type="term" value="P:xanthine metabolic process"/>
    <property type="evidence" value="ECO:0007669"/>
    <property type="project" value="InterPro"/>
</dbReference>
<dbReference type="GO" id="GO:0032265">
    <property type="term" value="P:XMP salvage"/>
    <property type="evidence" value="ECO:0007669"/>
    <property type="project" value="UniProtKB-UniRule"/>
</dbReference>
<dbReference type="CDD" id="cd06223">
    <property type="entry name" value="PRTases_typeI"/>
    <property type="match status" value="1"/>
</dbReference>
<dbReference type="Gene3D" id="3.40.50.2020">
    <property type="match status" value="1"/>
</dbReference>
<dbReference type="HAMAP" id="MF_01184">
    <property type="entry name" value="XPRTase"/>
    <property type="match status" value="1"/>
</dbReference>
<dbReference type="InterPro" id="IPR000836">
    <property type="entry name" value="PRibTrfase_dom"/>
</dbReference>
<dbReference type="InterPro" id="IPR029057">
    <property type="entry name" value="PRTase-like"/>
</dbReference>
<dbReference type="InterPro" id="IPR050118">
    <property type="entry name" value="Pur/Pyrimidine_PRTase"/>
</dbReference>
<dbReference type="InterPro" id="IPR010079">
    <property type="entry name" value="Xanthine_PRibTrfase"/>
</dbReference>
<dbReference type="NCBIfam" id="NF006671">
    <property type="entry name" value="PRK09219.1"/>
    <property type="match status" value="1"/>
</dbReference>
<dbReference type="NCBIfam" id="TIGR01744">
    <property type="entry name" value="XPRTase"/>
    <property type="match status" value="1"/>
</dbReference>
<dbReference type="PANTHER" id="PTHR43864">
    <property type="entry name" value="HYPOXANTHINE/GUANINE PHOSPHORIBOSYLTRANSFERASE"/>
    <property type="match status" value="1"/>
</dbReference>
<dbReference type="PANTHER" id="PTHR43864:SF1">
    <property type="entry name" value="XANTHINE PHOSPHORIBOSYLTRANSFERASE"/>
    <property type="match status" value="1"/>
</dbReference>
<dbReference type="Pfam" id="PF00156">
    <property type="entry name" value="Pribosyltran"/>
    <property type="match status" value="1"/>
</dbReference>
<dbReference type="SUPFAM" id="SSF53271">
    <property type="entry name" value="PRTase-like"/>
    <property type="match status" value="1"/>
</dbReference>
<comment type="function">
    <text evidence="1">Converts the preformed base xanthine, a product of nucleic acid breakdown, to xanthosine 5'-monophosphate (XMP), so it can be reused for RNA or DNA synthesis.</text>
</comment>
<comment type="catalytic activity">
    <reaction evidence="1">
        <text>XMP + diphosphate = xanthine + 5-phospho-alpha-D-ribose 1-diphosphate</text>
        <dbReference type="Rhea" id="RHEA:10800"/>
        <dbReference type="ChEBI" id="CHEBI:17712"/>
        <dbReference type="ChEBI" id="CHEBI:33019"/>
        <dbReference type="ChEBI" id="CHEBI:57464"/>
        <dbReference type="ChEBI" id="CHEBI:58017"/>
        <dbReference type="EC" id="2.4.2.22"/>
    </reaction>
</comment>
<comment type="pathway">
    <text evidence="1">Purine metabolism; XMP biosynthesis via salvage pathway; XMP from xanthine: step 1/1.</text>
</comment>
<comment type="subunit">
    <text evidence="1">Homodimer.</text>
</comment>
<comment type="subcellular location">
    <subcellularLocation>
        <location evidence="1">Cytoplasm</location>
    </subcellularLocation>
</comment>
<comment type="similarity">
    <text evidence="1">Belongs to the purine/pyrimidine phosphoribosyltransferase family. Xpt subfamily.</text>
</comment>
<organism>
    <name type="scientific">Streptococcus agalactiae serotype III (strain NEM316)</name>
    <dbReference type="NCBI Taxonomy" id="211110"/>
    <lineage>
        <taxon>Bacteria</taxon>
        <taxon>Bacillati</taxon>
        <taxon>Bacillota</taxon>
        <taxon>Bacilli</taxon>
        <taxon>Lactobacillales</taxon>
        <taxon>Streptococcaceae</taxon>
        <taxon>Streptococcus</taxon>
    </lineage>
</organism>
<evidence type="ECO:0000255" key="1">
    <source>
        <dbReference type="HAMAP-Rule" id="MF_01184"/>
    </source>
</evidence>
<keyword id="KW-0963">Cytoplasm</keyword>
<keyword id="KW-0328">Glycosyltransferase</keyword>
<keyword id="KW-0660">Purine salvage</keyword>
<keyword id="KW-0808">Transferase</keyword>
<accession>Q8E5B5</accession>
<proteinExistence type="inferred from homology"/>
<protein>
    <recommendedName>
        <fullName evidence="1">Xanthine phosphoribosyltransferase</fullName>
        <shortName evidence="1">XPRTase</shortName>
        <ecNumber evidence="1">2.4.2.22</ecNumber>
    </recommendedName>
</protein>
<feature type="chain" id="PRO_0000339760" description="Xanthine phosphoribosyltransferase">
    <location>
        <begin position="1"/>
        <end position="193"/>
    </location>
</feature>
<feature type="binding site" evidence="1">
    <location>
        <position position="20"/>
    </location>
    <ligand>
        <name>xanthine</name>
        <dbReference type="ChEBI" id="CHEBI:17712"/>
    </ligand>
</feature>
<feature type="binding site" evidence="1">
    <location>
        <position position="27"/>
    </location>
    <ligand>
        <name>xanthine</name>
        <dbReference type="ChEBI" id="CHEBI:17712"/>
    </ligand>
</feature>
<feature type="binding site" evidence="1">
    <location>
        <begin position="128"/>
        <end position="132"/>
    </location>
    <ligand>
        <name>5-phospho-alpha-D-ribose 1-diphosphate</name>
        <dbReference type="ChEBI" id="CHEBI:58017"/>
    </ligand>
</feature>
<feature type="binding site" evidence="1">
    <location>
        <position position="156"/>
    </location>
    <ligand>
        <name>xanthine</name>
        <dbReference type="ChEBI" id="CHEBI:17712"/>
    </ligand>
</feature>
<gene>
    <name evidence="1" type="primary">xpt</name>
    <name type="ordered locus">gbs1117</name>
</gene>
<sequence length="193" mass="20765">MKLLEERILKDGDVLGENILKVDSFLTHQVDFELMQEIGKVFADKYKEAGITKVVTIEASGIAPAVYAAQALGVPMIFAKKAKNITMTEGILTAEVYSFTKQVTSQVSIVSRFLSNDDTVLIIDDFLANGQAAKGLLEIIGQAGAKVAGIGIVIEKSFQDGRDLLEKTGVPVTSLARIKAFENGRVVFAEADA</sequence>
<reference key="1">
    <citation type="journal article" date="2002" name="Mol. Microbiol.">
        <title>Genome sequence of Streptococcus agalactiae, a pathogen causing invasive neonatal disease.</title>
        <authorList>
            <person name="Glaser P."/>
            <person name="Rusniok C."/>
            <person name="Buchrieser C."/>
            <person name="Chevalier F."/>
            <person name="Frangeul L."/>
            <person name="Msadek T."/>
            <person name="Zouine M."/>
            <person name="Couve E."/>
            <person name="Lalioui L."/>
            <person name="Poyart C."/>
            <person name="Trieu-Cuot P."/>
            <person name="Kunst F."/>
        </authorList>
    </citation>
    <scope>NUCLEOTIDE SEQUENCE [LARGE SCALE GENOMIC DNA]</scope>
    <source>
        <strain>NEM316</strain>
    </source>
</reference>
<name>XPT_STRA3</name>